<sequence>MTDKTSLSYKDAGVDIDAGNALVDRIKGVVKKTRRPEVMGGLGGFGALCALPQKYREPVLVSGTDGVGTKLRLAMDLKRHDAIGIDLVAMCVNDLVVQGAEPLFFLDYYATGKLDVDTAASVINGIAEGCLQSGCALVGGETAEMPGMYHGEDYDVAGFCVGVVEKSEIIDGSRVAEGDVLIALGSSGPHSNGYSLVRKIIDVSGCDPQTTLLEGKPLADHLLEPTRIYVKSVLELIENIDVHAIAHLTGGGFWENIPRVLPENTQAVINESSWQWPAIFTWLQTAGNVSRHEMYRTFNCGVGMVIALSAPEADKALALLNEKGENAWKIGIIKASDSEQRVVIE</sequence>
<reference key="1">
    <citation type="journal article" date="2005" name="Nucleic Acids Res.">
        <title>The genome sequence of Salmonella enterica serovar Choleraesuis, a highly invasive and resistant zoonotic pathogen.</title>
        <authorList>
            <person name="Chiu C.-H."/>
            <person name="Tang P."/>
            <person name="Chu C."/>
            <person name="Hu S."/>
            <person name="Bao Q."/>
            <person name="Yu J."/>
            <person name="Chou Y.-Y."/>
            <person name="Wang H.-S."/>
            <person name="Lee Y.-S."/>
        </authorList>
    </citation>
    <scope>NUCLEOTIDE SEQUENCE [LARGE SCALE GENOMIC DNA]</scope>
    <source>
        <strain>SC-B67</strain>
    </source>
</reference>
<comment type="catalytic activity">
    <reaction evidence="2">
        <text>2-formamido-N(1)-(5-O-phospho-beta-D-ribosyl)acetamidine + ATP = 5-amino-1-(5-phospho-beta-D-ribosyl)imidazole + ADP + phosphate + H(+)</text>
        <dbReference type="Rhea" id="RHEA:23032"/>
        <dbReference type="ChEBI" id="CHEBI:15378"/>
        <dbReference type="ChEBI" id="CHEBI:30616"/>
        <dbReference type="ChEBI" id="CHEBI:43474"/>
        <dbReference type="ChEBI" id="CHEBI:137981"/>
        <dbReference type="ChEBI" id="CHEBI:147287"/>
        <dbReference type="ChEBI" id="CHEBI:456216"/>
        <dbReference type="EC" id="6.3.3.1"/>
    </reaction>
</comment>
<comment type="pathway">
    <text evidence="2">Purine metabolism; IMP biosynthesis via de novo pathway; 5-amino-1-(5-phospho-D-ribosyl)imidazole from N(2)-formyl-N(1)-(5-phospho-D-ribosyl)glycinamide: step 2/2.</text>
</comment>
<comment type="subcellular location">
    <subcellularLocation>
        <location evidence="2">Cytoplasm</location>
    </subcellularLocation>
</comment>
<comment type="similarity">
    <text evidence="2">Belongs to the AIR synthase family.</text>
</comment>
<gene>
    <name evidence="2" type="primary">purM</name>
    <name type="ordered locus">SCH_2496</name>
</gene>
<protein>
    <recommendedName>
        <fullName evidence="2">Phosphoribosylformylglycinamidine cyclo-ligase</fullName>
        <ecNumber evidence="2">6.3.3.1</ecNumber>
    </recommendedName>
    <alternativeName>
        <fullName evidence="2">AIR synthase</fullName>
    </alternativeName>
    <alternativeName>
        <fullName evidence="2">AIRS</fullName>
    </alternativeName>
    <alternativeName>
        <fullName evidence="2">Phosphoribosyl-aminoimidazole synthetase</fullName>
    </alternativeName>
</protein>
<accession>Q57LL0</accession>
<organism>
    <name type="scientific">Salmonella choleraesuis (strain SC-B67)</name>
    <dbReference type="NCBI Taxonomy" id="321314"/>
    <lineage>
        <taxon>Bacteria</taxon>
        <taxon>Pseudomonadati</taxon>
        <taxon>Pseudomonadota</taxon>
        <taxon>Gammaproteobacteria</taxon>
        <taxon>Enterobacterales</taxon>
        <taxon>Enterobacteriaceae</taxon>
        <taxon>Salmonella</taxon>
    </lineage>
</organism>
<feature type="initiator methionine" description="Removed" evidence="1">
    <location>
        <position position="1"/>
    </location>
</feature>
<feature type="chain" id="PRO_0000258400" description="Phosphoribosylformylglycinamidine cyclo-ligase">
    <location>
        <begin position="2"/>
        <end position="345"/>
    </location>
</feature>
<evidence type="ECO:0000250" key="1"/>
<evidence type="ECO:0000255" key="2">
    <source>
        <dbReference type="HAMAP-Rule" id="MF_00741"/>
    </source>
</evidence>
<proteinExistence type="inferred from homology"/>
<keyword id="KW-0067">ATP-binding</keyword>
<keyword id="KW-0963">Cytoplasm</keyword>
<keyword id="KW-0436">Ligase</keyword>
<keyword id="KW-0547">Nucleotide-binding</keyword>
<keyword id="KW-0658">Purine biosynthesis</keyword>
<name>PUR5_SALCH</name>
<dbReference type="EC" id="6.3.3.1" evidence="2"/>
<dbReference type="EMBL" id="AE017220">
    <property type="protein sequence ID" value="AAX66402.1"/>
    <property type="molecule type" value="Genomic_DNA"/>
</dbReference>
<dbReference type="RefSeq" id="WP_000130475.1">
    <property type="nucleotide sequence ID" value="NC_006905.1"/>
</dbReference>
<dbReference type="SMR" id="Q57LL0"/>
<dbReference type="KEGG" id="sec:SCH_2496"/>
<dbReference type="HOGENOM" id="CLU_047116_0_0_6"/>
<dbReference type="UniPathway" id="UPA00074">
    <property type="reaction ID" value="UER00129"/>
</dbReference>
<dbReference type="Proteomes" id="UP000000538">
    <property type="component" value="Chromosome"/>
</dbReference>
<dbReference type="GO" id="GO:0005829">
    <property type="term" value="C:cytosol"/>
    <property type="evidence" value="ECO:0007669"/>
    <property type="project" value="TreeGrafter"/>
</dbReference>
<dbReference type="GO" id="GO:0005524">
    <property type="term" value="F:ATP binding"/>
    <property type="evidence" value="ECO:0007669"/>
    <property type="project" value="UniProtKB-KW"/>
</dbReference>
<dbReference type="GO" id="GO:0004637">
    <property type="term" value="F:phosphoribosylamine-glycine ligase activity"/>
    <property type="evidence" value="ECO:0007669"/>
    <property type="project" value="TreeGrafter"/>
</dbReference>
<dbReference type="GO" id="GO:0004641">
    <property type="term" value="F:phosphoribosylformylglycinamidine cyclo-ligase activity"/>
    <property type="evidence" value="ECO:0007669"/>
    <property type="project" value="UniProtKB-UniRule"/>
</dbReference>
<dbReference type="GO" id="GO:0006189">
    <property type="term" value="P:'de novo' IMP biosynthetic process"/>
    <property type="evidence" value="ECO:0007669"/>
    <property type="project" value="UniProtKB-UniRule"/>
</dbReference>
<dbReference type="GO" id="GO:0046084">
    <property type="term" value="P:adenine biosynthetic process"/>
    <property type="evidence" value="ECO:0007669"/>
    <property type="project" value="TreeGrafter"/>
</dbReference>
<dbReference type="CDD" id="cd02196">
    <property type="entry name" value="PurM"/>
    <property type="match status" value="1"/>
</dbReference>
<dbReference type="FunFam" id="3.30.1330.10:FF:000001">
    <property type="entry name" value="Phosphoribosylformylglycinamidine cyclo-ligase"/>
    <property type="match status" value="1"/>
</dbReference>
<dbReference type="FunFam" id="3.90.650.10:FF:000001">
    <property type="entry name" value="Phosphoribosylformylglycinamidine cyclo-ligase"/>
    <property type="match status" value="1"/>
</dbReference>
<dbReference type="Gene3D" id="3.90.650.10">
    <property type="entry name" value="PurM-like C-terminal domain"/>
    <property type="match status" value="1"/>
</dbReference>
<dbReference type="Gene3D" id="3.30.1330.10">
    <property type="entry name" value="PurM-like, N-terminal domain"/>
    <property type="match status" value="1"/>
</dbReference>
<dbReference type="HAMAP" id="MF_00741">
    <property type="entry name" value="AIRS"/>
    <property type="match status" value="1"/>
</dbReference>
<dbReference type="InterPro" id="IPR010918">
    <property type="entry name" value="PurM-like_C_dom"/>
</dbReference>
<dbReference type="InterPro" id="IPR036676">
    <property type="entry name" value="PurM-like_C_sf"/>
</dbReference>
<dbReference type="InterPro" id="IPR016188">
    <property type="entry name" value="PurM-like_N"/>
</dbReference>
<dbReference type="InterPro" id="IPR036921">
    <property type="entry name" value="PurM-like_N_sf"/>
</dbReference>
<dbReference type="InterPro" id="IPR004733">
    <property type="entry name" value="PurM_cligase"/>
</dbReference>
<dbReference type="NCBIfam" id="TIGR00878">
    <property type="entry name" value="purM"/>
    <property type="match status" value="1"/>
</dbReference>
<dbReference type="PANTHER" id="PTHR10520:SF12">
    <property type="entry name" value="TRIFUNCTIONAL PURINE BIOSYNTHETIC PROTEIN ADENOSINE-3"/>
    <property type="match status" value="1"/>
</dbReference>
<dbReference type="PANTHER" id="PTHR10520">
    <property type="entry name" value="TRIFUNCTIONAL PURINE BIOSYNTHETIC PROTEIN ADENOSINE-3-RELATED"/>
    <property type="match status" value="1"/>
</dbReference>
<dbReference type="Pfam" id="PF00586">
    <property type="entry name" value="AIRS"/>
    <property type="match status" value="1"/>
</dbReference>
<dbReference type="Pfam" id="PF02769">
    <property type="entry name" value="AIRS_C"/>
    <property type="match status" value="1"/>
</dbReference>
<dbReference type="SUPFAM" id="SSF56042">
    <property type="entry name" value="PurM C-terminal domain-like"/>
    <property type="match status" value="1"/>
</dbReference>
<dbReference type="SUPFAM" id="SSF55326">
    <property type="entry name" value="PurM N-terminal domain-like"/>
    <property type="match status" value="1"/>
</dbReference>